<protein>
    <recommendedName>
        <fullName>Retinal rod rhodopsin-sensitive cGMP 3',5'-cyclic phosphodiesterase subunit gamma</fullName>
        <shortName>GMP-PDE gamma</shortName>
        <ecNumber>3.1.4.35</ecNumber>
    </recommendedName>
</protein>
<proteinExistence type="inferred from homology"/>
<accession>P54827</accession>
<reference key="1">
    <citation type="journal article" date="1996" name="Gene">
        <title>Cloning and characterization of the cDNA and gene encoding the gamma-subunit of cGMP-phosphodiesterase in canine retinal rod photoreceptor cells.</title>
        <authorList>
            <person name="Wang W."/>
            <person name="Acland G.M."/>
            <person name="Aguirre G.D."/>
            <person name="Ray K."/>
        </authorList>
    </citation>
    <scope>NUCLEOTIDE SEQUENCE [GENOMIC DNA / MRNA]</scope>
    <source>
        <tissue>Retina</tissue>
    </source>
</reference>
<reference key="2">
    <citation type="journal article" date="1997" name="Res. Vet. Sci.">
        <title>Cloning of the cDNA encoding rod photoreceptor cGMP-phosphodiesterase alpha and gamma subunits from the retinal degenerate Labrador retriever dog.</title>
        <authorList>
            <person name="Kylma T."/>
            <person name="Paulin L."/>
            <person name="Hurwitz M.Y."/>
            <person name="Hurwitz R.L."/>
            <person name="Kommonen B."/>
        </authorList>
    </citation>
    <scope>NUCLEOTIDE SEQUENCE [MRNA]</scope>
    <source>
        <strain>Labrador retriever</strain>
        <tissue>Retina</tissue>
    </source>
</reference>
<name>CNRG_CANLF</name>
<evidence type="ECO:0000250" key="1">
    <source>
        <dbReference type="UniProtKB" id="P04972"/>
    </source>
</evidence>
<evidence type="ECO:0000256" key="2">
    <source>
        <dbReference type="SAM" id="MobiDB-lite"/>
    </source>
</evidence>
<evidence type="ECO:0000305" key="3"/>
<comment type="function">
    <text>Participates in processes of transmission and amplification of the visual signal. cGMP-PDEs are the effector molecules in G-protein-mediated phototransduction in vertebrate rods and cones.</text>
</comment>
<comment type="catalytic activity">
    <reaction>
        <text>3',5'-cyclic GMP + H2O = GMP + H(+)</text>
        <dbReference type="Rhea" id="RHEA:16957"/>
        <dbReference type="ChEBI" id="CHEBI:15377"/>
        <dbReference type="ChEBI" id="CHEBI:15378"/>
        <dbReference type="ChEBI" id="CHEBI:57746"/>
        <dbReference type="ChEBI" id="CHEBI:58115"/>
        <dbReference type="EC" id="3.1.4.35"/>
    </reaction>
</comment>
<comment type="subunit">
    <text>Oligomer composed of two catalytic chains (alpha and beta), an inhibitory chain (gamma) and the delta chain.</text>
</comment>
<comment type="similarity">
    <text evidence="3">Belongs to the rod/cone cGMP-PDE gamma subunit family.</text>
</comment>
<gene>
    <name type="primary">PDE6G</name>
    <name type="synonym">PDEG</name>
</gene>
<keyword id="KW-0007">Acetylation</keyword>
<keyword id="KW-0140">cGMP</keyword>
<keyword id="KW-0378">Hydrolase</keyword>
<keyword id="KW-1185">Reference proteome</keyword>
<keyword id="KW-0716">Sensory transduction</keyword>
<keyword id="KW-0844">Vision</keyword>
<sequence>MNLEPPKAEIRSATRVIGGPVTPRKGPPKFKQRQTRQFKSKPPKKGVQGFGDDIPGMEGLGTDITVICPWEAFNHLELHELAQYGII</sequence>
<dbReference type="EC" id="3.1.4.35"/>
<dbReference type="EMBL" id="U49359">
    <property type="protein sequence ID" value="AAB40379.1"/>
    <property type="molecule type" value="mRNA"/>
</dbReference>
<dbReference type="EMBL" id="U49360">
    <property type="protein sequence ID" value="AAB00116.1"/>
    <property type="molecule type" value="Genomic_DNA"/>
</dbReference>
<dbReference type="EMBL" id="Z69973">
    <property type="protein sequence ID" value="CAA93815.1"/>
    <property type="molecule type" value="Genomic_DNA"/>
</dbReference>
<dbReference type="PIR" id="JC5329">
    <property type="entry name" value="JC5329"/>
</dbReference>
<dbReference type="RefSeq" id="NP_001003235.1">
    <property type="nucleotide sequence ID" value="NM_001003235.1"/>
</dbReference>
<dbReference type="RefSeq" id="XP_013971663.1">
    <property type="nucleotide sequence ID" value="XM_014116188.1"/>
</dbReference>
<dbReference type="RefSeq" id="XP_038530894.1">
    <property type="nucleotide sequence ID" value="XM_038674966.1"/>
</dbReference>
<dbReference type="BMRB" id="P54827"/>
<dbReference type="SMR" id="P54827"/>
<dbReference type="FunCoup" id="P54827">
    <property type="interactions" value="12"/>
</dbReference>
<dbReference type="STRING" id="9615.ENSCAFP00000008629"/>
<dbReference type="BindingDB" id="P54827"/>
<dbReference type="PaxDb" id="9612-ENSCAFP00000008629"/>
<dbReference type="Ensembl" id="ENSCAFT00000009298.4">
    <property type="protein sequence ID" value="ENSCAFP00000008629.4"/>
    <property type="gene ID" value="ENSCAFG00000005767.4"/>
</dbReference>
<dbReference type="Ensembl" id="ENSCAFT00030029095.1">
    <property type="protein sequence ID" value="ENSCAFP00030025364.1"/>
    <property type="gene ID" value="ENSCAFG00030015801.1"/>
</dbReference>
<dbReference type="Ensembl" id="ENSCAFT00040000937.1">
    <property type="protein sequence ID" value="ENSCAFP00040000790.1"/>
    <property type="gene ID" value="ENSCAFG00040000536.1"/>
</dbReference>
<dbReference type="GeneID" id="403911"/>
<dbReference type="KEGG" id="cfa:403911"/>
<dbReference type="CTD" id="5148"/>
<dbReference type="VGNC" id="VGNC:44361">
    <property type="gene designation" value="PDE6G"/>
</dbReference>
<dbReference type="eggNOG" id="ENOG502S20G">
    <property type="taxonomic scope" value="Eukaryota"/>
</dbReference>
<dbReference type="HOGENOM" id="CLU_170469_0_0_1"/>
<dbReference type="InParanoid" id="P54827"/>
<dbReference type="OMA" id="KGRGWHP"/>
<dbReference type="OrthoDB" id="8525078at2759"/>
<dbReference type="TreeFam" id="TF333297"/>
<dbReference type="Reactome" id="R-CFA-2485179">
    <property type="pathway name" value="Activation of the phototransduction cascade"/>
</dbReference>
<dbReference type="Reactome" id="R-CFA-2514859">
    <property type="pathway name" value="Inactivation, recovery and regulation of the phototransduction cascade"/>
</dbReference>
<dbReference type="Reactome" id="R-CFA-4086398">
    <property type="pathway name" value="Ca2+ pathway"/>
</dbReference>
<dbReference type="Proteomes" id="UP000002254">
    <property type="component" value="Chromosome 9"/>
</dbReference>
<dbReference type="Proteomes" id="UP000694429">
    <property type="component" value="Chromosome 9"/>
</dbReference>
<dbReference type="Proteomes" id="UP000694542">
    <property type="component" value="Chromosome 9"/>
</dbReference>
<dbReference type="Proteomes" id="UP000805418">
    <property type="component" value="Unplaced"/>
</dbReference>
<dbReference type="GO" id="GO:0042622">
    <property type="term" value="C:photoreceptor outer segment membrane"/>
    <property type="evidence" value="ECO:0000318"/>
    <property type="project" value="GO_Central"/>
</dbReference>
<dbReference type="GO" id="GO:0047555">
    <property type="term" value="F:3',5'-cyclic-GMP phosphodiesterase activity"/>
    <property type="evidence" value="ECO:0007669"/>
    <property type="project" value="UniProtKB-EC"/>
</dbReference>
<dbReference type="GO" id="GO:0030553">
    <property type="term" value="F:cGMP binding"/>
    <property type="evidence" value="ECO:0007669"/>
    <property type="project" value="InterPro"/>
</dbReference>
<dbReference type="GO" id="GO:0045742">
    <property type="term" value="P:positive regulation of epidermal growth factor receptor signaling pathway"/>
    <property type="evidence" value="ECO:0000318"/>
    <property type="project" value="GO_Central"/>
</dbReference>
<dbReference type="GO" id="GO:0045745">
    <property type="term" value="P:positive regulation of G protein-coupled receptor signaling pathway"/>
    <property type="evidence" value="ECO:0000318"/>
    <property type="project" value="GO_Central"/>
</dbReference>
<dbReference type="GO" id="GO:0007601">
    <property type="term" value="P:visual perception"/>
    <property type="evidence" value="ECO:0007669"/>
    <property type="project" value="UniProtKB-KW"/>
</dbReference>
<dbReference type="FunFam" id="4.10.1120.10:FF:000001">
    <property type="entry name" value="retinal rod rhodopsin-sensitive cGMP 3',5'-cyclic phosphodiesterase subunit gamma"/>
    <property type="match status" value="1"/>
</dbReference>
<dbReference type="Gene3D" id="4.10.1120.10">
    <property type="entry name" value="Retinal cGMP phosphodiesterase, gamma subunit"/>
    <property type="match status" value="1"/>
</dbReference>
<dbReference type="InterPro" id="IPR006952">
    <property type="entry name" value="PDE6_gamma"/>
</dbReference>
<dbReference type="InterPro" id="IPR037030">
    <property type="entry name" value="PDE6_gamma_sf"/>
</dbReference>
<dbReference type="PANTHER" id="PTHR12122">
    <property type="entry name" value="RETINAL CONE RHODOPSIN-SENSITIVE CGMP 3',5'-CYCLIC PHOSPHODIESTERASE GAMMA-SUBUNIT-RELATED"/>
    <property type="match status" value="1"/>
</dbReference>
<dbReference type="PANTHER" id="PTHR12122:SF4">
    <property type="entry name" value="RETINAL ROD RHODOPSIN-SENSITIVE CGMP 3',5'-CYCLIC PHOSPHODIESTERASE SUBUNIT GAMMA"/>
    <property type="match status" value="1"/>
</dbReference>
<dbReference type="Pfam" id="PF04868">
    <property type="entry name" value="PDE6_gamma"/>
    <property type="match status" value="1"/>
</dbReference>
<dbReference type="PIRSF" id="PIRSF000969">
    <property type="entry name" value="35-cGMP_Pdiase_g"/>
    <property type="match status" value="1"/>
</dbReference>
<organism>
    <name type="scientific">Canis lupus familiaris</name>
    <name type="common">Dog</name>
    <name type="synonym">Canis familiaris</name>
    <dbReference type="NCBI Taxonomy" id="9615"/>
    <lineage>
        <taxon>Eukaryota</taxon>
        <taxon>Metazoa</taxon>
        <taxon>Chordata</taxon>
        <taxon>Craniata</taxon>
        <taxon>Vertebrata</taxon>
        <taxon>Euteleostomi</taxon>
        <taxon>Mammalia</taxon>
        <taxon>Eutheria</taxon>
        <taxon>Laurasiatheria</taxon>
        <taxon>Carnivora</taxon>
        <taxon>Caniformia</taxon>
        <taxon>Canidae</taxon>
        <taxon>Canis</taxon>
    </lineage>
</organism>
<feature type="chain" id="PRO_0000166114" description="Retinal rod rhodopsin-sensitive cGMP 3',5'-cyclic phosphodiesterase subunit gamma">
    <location>
        <begin position="1"/>
        <end position="87"/>
    </location>
</feature>
<feature type="region of interest" description="Disordered" evidence="2">
    <location>
        <begin position="1"/>
        <end position="55"/>
    </location>
</feature>
<feature type="compositionally biased region" description="Basic and acidic residues" evidence="2">
    <location>
        <begin position="1"/>
        <end position="12"/>
    </location>
</feature>
<feature type="compositionally biased region" description="Basic residues" evidence="2">
    <location>
        <begin position="26"/>
        <end position="44"/>
    </location>
</feature>
<feature type="modified residue" description="N-acetylmethionine" evidence="1">
    <location>
        <position position="1"/>
    </location>
</feature>